<accession>P60506</accession>
<accession>Q69503</accession>
<proteinExistence type="evidence at protein level"/>
<sequence>MWTILLFCVPVIYGELYPDFCPLAVVDFDVNATVDDLLLFDISLSKQCSDDKIRHSAVAAMTDNAFFFGNSETQIETDFGKYLAFNCYQVFSTLNHFLFKNFKKTKGLMKRYDKLCLDVESYIHIQIICSPFKSFIRLRRMNETGISPRILETTFYLQNKRNSTWVAIKNYLGEDDPFTYRIWHTLTHAKNFLINSCENDFNQLFFWQRKYLSLAKTFEATFKQGFNPMIEQRNEQRYRTNNIDCSFSKFRQNGVKVAVCKYTGWGVSGFGSLEVLQKIKSPFGEEWKRVGFNSTGAFTPLYGSDVLWGLIFLRVEMTTYVCTCTNKNTGTQIQVTLPDVDLDLLDSEKTSSNVFVDMLCYTLIAILFLAFVTAVVLLGVSCLDGVQKVLTWPLQHIQKEPVSEKIINLTNLMFGQEPLPKKESLKQQCL</sequence>
<gene>
    <name type="primary">U21</name>
</gene>
<comment type="function">
    <text>Binds to MHC class I molecules in the endoplasmic reticulum and targets them from the Golgi directly to the lysosomes. Once in the lysosomes both proteins are degraded. In consequence, surface class I molecules are down-regulated and infected cells are masked for immune recognition by cytotoxic T lymphocytes.</text>
</comment>
<comment type="subcellular location">
    <subcellularLocation>
        <location evidence="3">Host endoplasmic reticulum membrane</location>
        <topology evidence="3">Single-pass type I membrane protein</topology>
    </subcellularLocation>
</comment>
<comment type="domain">
    <text evidence="2">The ER-lumenal domain associates with class I MHC molecules and is responsible for lysosomal sorting.</text>
</comment>
<comment type="PTM">
    <text>N-glycosylated.</text>
</comment>
<comment type="similarity">
    <text evidence="3">Belongs to the herpesviridae U21 family.</text>
</comment>
<name>U21_HHV7R</name>
<feature type="chain" id="PRO_0000116358" description="U21 glycoprotein">
    <location>
        <begin position="1"/>
        <end position="430"/>
    </location>
</feature>
<feature type="topological domain" description="Lumenal" evidence="1">
    <location>
        <begin position="1"/>
        <end position="362"/>
    </location>
</feature>
<feature type="transmembrane region" description="Helical" evidence="1">
    <location>
        <begin position="363"/>
        <end position="383"/>
    </location>
</feature>
<feature type="topological domain" description="Cytoplasmic" evidence="1">
    <location>
        <begin position="384"/>
        <end position="430"/>
    </location>
</feature>
<feature type="glycosylation site" description="N-linked (GlcNAc...) asparagine; by host" evidence="1">
    <location>
        <position position="31"/>
    </location>
</feature>
<feature type="glycosylation site" description="N-linked (GlcNAc...) asparagine; by host" evidence="1">
    <location>
        <position position="142"/>
    </location>
</feature>
<feature type="glycosylation site" description="N-linked (GlcNAc...) asparagine; by host" evidence="1">
    <location>
        <position position="162"/>
    </location>
</feature>
<feature type="glycosylation site" description="N-linked (GlcNAc...) asparagine; by host" evidence="1">
    <location>
        <position position="293"/>
    </location>
</feature>
<organismHost>
    <name type="scientific">Homo sapiens</name>
    <name type="common">Human</name>
    <dbReference type="NCBI Taxonomy" id="9606"/>
</organismHost>
<organism>
    <name type="scientific">Human herpesvirus 7 (strain RK)</name>
    <name type="common">HHV-7</name>
    <name type="synonym">Human T lymphotropic virus</name>
    <dbReference type="NCBI Taxonomy" id="262398"/>
    <lineage>
        <taxon>Viruses</taxon>
        <taxon>Duplodnaviria</taxon>
        <taxon>Heunggongvirae</taxon>
        <taxon>Peploviricota</taxon>
        <taxon>Herviviricetes</taxon>
        <taxon>Herpesvirales</taxon>
        <taxon>Orthoherpesviridae</taxon>
        <taxon>Betaherpesvirinae</taxon>
        <taxon>Roseolovirus</taxon>
        <taxon>Roseolovirus humanbeta7</taxon>
        <taxon>Human betaherpesvirus 7</taxon>
    </lineage>
</organism>
<evidence type="ECO:0000255" key="1"/>
<evidence type="ECO:0000269" key="2">
    <source>
    </source>
</evidence>
<evidence type="ECO:0000305" key="3"/>
<dbReference type="EMBL" id="AF037218">
    <property type="protein sequence ID" value="AAC40735.1"/>
    <property type="molecule type" value="Genomic_DNA"/>
</dbReference>
<dbReference type="PIR" id="T41923">
    <property type="entry name" value="T41923"/>
</dbReference>
<dbReference type="RefSeq" id="YP_073761.1">
    <property type="nucleotide sequence ID" value="NC_001716.2"/>
</dbReference>
<dbReference type="GlyCosmos" id="P60506">
    <property type="glycosylation" value="4 sites, No reported glycans"/>
</dbReference>
<dbReference type="DNASU" id="3289479"/>
<dbReference type="GeneID" id="3289479"/>
<dbReference type="KEGG" id="vg:3289479"/>
<dbReference type="Proteomes" id="UP000098510">
    <property type="component" value="Segment"/>
</dbReference>
<dbReference type="GO" id="GO:0044167">
    <property type="term" value="C:host cell endoplasmic reticulum membrane"/>
    <property type="evidence" value="ECO:0007669"/>
    <property type="project" value="UniProtKB-SubCell"/>
</dbReference>
<dbReference type="GO" id="GO:0016020">
    <property type="term" value="C:membrane"/>
    <property type="evidence" value="ECO:0007669"/>
    <property type="project" value="UniProtKB-KW"/>
</dbReference>
<reference key="1">
    <citation type="journal article" date="1998" name="Virology">
        <title>The DNA sequence of the RK strain of human herpesvirus 7.</title>
        <authorList>
            <person name="Megaw A.G."/>
            <person name="Rapaport D."/>
            <person name="Avidor B."/>
            <person name="Frenkel N."/>
            <person name="Davison A.J."/>
        </authorList>
    </citation>
    <scope>NUCLEOTIDE SEQUENCE [GENOMIC DNA]</scope>
</reference>
<reference key="2">
    <citation type="journal article" date="2001" name="J. Virol.">
        <title>A human herpesvirus 7 glycoprotein, U21, diverts major histocompatibility complex class I molecules to lysosomes.</title>
        <authorList>
            <person name="Hudson A.W."/>
            <person name="Howley P.M."/>
            <person name="Ploegh H.L."/>
        </authorList>
    </citation>
    <scope>NUCLEOTIDE SEQUENCE [GENOMIC DNA]</scope>
    <scope>IDENTIFICATION</scope>
    <scope>CHARACTERIZATION</scope>
</reference>
<reference key="3">
    <citation type="journal article" date="2003" name="Traffic">
        <title>The ER-lumenal domain of the HHV-7 immunoevasin U21 directs class I MHC molecules to lysosomes.</title>
        <authorList>
            <person name="Hudson A.W."/>
            <person name="Blom D."/>
            <person name="Howley P.M."/>
            <person name="Ploegh H.L."/>
        </authorList>
    </citation>
    <scope>DOMAIN ER-LUMENAL</scope>
</reference>
<keyword id="KW-0325">Glycoprotein</keyword>
<keyword id="KW-1038">Host endoplasmic reticulum</keyword>
<keyword id="KW-1043">Host membrane</keyword>
<keyword id="KW-0945">Host-virus interaction</keyword>
<keyword id="KW-0472">Membrane</keyword>
<keyword id="KW-0812">Transmembrane</keyword>
<keyword id="KW-1133">Transmembrane helix</keyword>
<keyword id="KW-0899">Viral immunoevasion</keyword>
<protein>
    <recommendedName>
        <fullName>U21 glycoprotein</fullName>
    </recommendedName>
    <alternativeName>
        <fullName>gp60</fullName>
    </alternativeName>
</protein>